<comment type="function">
    <text evidence="1">Catalyzes the radical-mediated insertion of two sulfur atoms into the C-6 and C-8 positions of the octanoyl moiety bound to the lipoyl domains of lipoate-dependent enzymes, thereby converting the octanoylated domains into lipoylated derivatives.</text>
</comment>
<comment type="catalytic activity">
    <reaction evidence="1">
        <text>[[Fe-S] cluster scaffold protein carrying a second [4Fe-4S](2+) cluster] + N(6)-octanoyl-L-lysyl-[protein] + 2 oxidized [2Fe-2S]-[ferredoxin] + 2 S-adenosyl-L-methionine + 4 H(+) = [[Fe-S] cluster scaffold protein] + N(6)-[(R)-dihydrolipoyl]-L-lysyl-[protein] + 4 Fe(3+) + 2 hydrogen sulfide + 2 5'-deoxyadenosine + 2 L-methionine + 2 reduced [2Fe-2S]-[ferredoxin]</text>
        <dbReference type="Rhea" id="RHEA:16585"/>
        <dbReference type="Rhea" id="RHEA-COMP:9928"/>
        <dbReference type="Rhea" id="RHEA-COMP:10000"/>
        <dbReference type="Rhea" id="RHEA-COMP:10001"/>
        <dbReference type="Rhea" id="RHEA-COMP:10475"/>
        <dbReference type="Rhea" id="RHEA-COMP:14568"/>
        <dbReference type="Rhea" id="RHEA-COMP:14569"/>
        <dbReference type="ChEBI" id="CHEBI:15378"/>
        <dbReference type="ChEBI" id="CHEBI:17319"/>
        <dbReference type="ChEBI" id="CHEBI:29034"/>
        <dbReference type="ChEBI" id="CHEBI:29919"/>
        <dbReference type="ChEBI" id="CHEBI:33722"/>
        <dbReference type="ChEBI" id="CHEBI:33737"/>
        <dbReference type="ChEBI" id="CHEBI:33738"/>
        <dbReference type="ChEBI" id="CHEBI:57844"/>
        <dbReference type="ChEBI" id="CHEBI:59789"/>
        <dbReference type="ChEBI" id="CHEBI:78809"/>
        <dbReference type="ChEBI" id="CHEBI:83100"/>
        <dbReference type="EC" id="2.8.1.8"/>
    </reaction>
</comment>
<comment type="cofactor">
    <cofactor evidence="1">
        <name>[4Fe-4S] cluster</name>
        <dbReference type="ChEBI" id="CHEBI:49883"/>
    </cofactor>
    <text evidence="1">Binds 2 [4Fe-4S] clusters per subunit. One cluster is coordinated with 3 cysteines and an exchangeable S-adenosyl-L-methionine.</text>
</comment>
<comment type="pathway">
    <text evidence="1">Protein modification; protein lipoylation via endogenous pathway; protein N(6)-(lipoyl)lysine from octanoyl-[acyl-carrier-protein]: step 2/2.</text>
</comment>
<comment type="subcellular location">
    <subcellularLocation>
        <location evidence="1">Cytoplasm</location>
    </subcellularLocation>
</comment>
<comment type="similarity">
    <text evidence="1">Belongs to the radical SAM superfamily. Lipoyl synthase family.</text>
</comment>
<protein>
    <recommendedName>
        <fullName evidence="1">Lipoyl synthase</fullName>
        <ecNumber evidence="1">2.8.1.8</ecNumber>
    </recommendedName>
    <alternativeName>
        <fullName evidence="1">Lip-syn</fullName>
        <shortName evidence="1">LS</shortName>
    </alternativeName>
    <alternativeName>
        <fullName evidence="1">Lipoate synthase</fullName>
    </alternativeName>
    <alternativeName>
        <fullName evidence="1">Lipoic acid synthase</fullName>
    </alternativeName>
    <alternativeName>
        <fullName evidence="1">Sulfur insertion protein LipA</fullName>
    </alternativeName>
</protein>
<evidence type="ECO:0000255" key="1">
    <source>
        <dbReference type="HAMAP-Rule" id="MF_00206"/>
    </source>
</evidence>
<evidence type="ECO:0000255" key="2">
    <source>
        <dbReference type="PROSITE-ProRule" id="PRU01266"/>
    </source>
</evidence>
<organism>
    <name type="scientific">Stenotrophomonas maltophilia (strain R551-3)</name>
    <dbReference type="NCBI Taxonomy" id="391008"/>
    <lineage>
        <taxon>Bacteria</taxon>
        <taxon>Pseudomonadati</taxon>
        <taxon>Pseudomonadota</taxon>
        <taxon>Gammaproteobacteria</taxon>
        <taxon>Lysobacterales</taxon>
        <taxon>Lysobacteraceae</taxon>
        <taxon>Stenotrophomonas</taxon>
        <taxon>Stenotrophomonas maltophilia group</taxon>
    </lineage>
</organism>
<accession>B4SJ16</accession>
<name>LIPA_STRM5</name>
<dbReference type="EC" id="2.8.1.8" evidence="1"/>
<dbReference type="EMBL" id="CP001111">
    <property type="protein sequence ID" value="ACF53141.1"/>
    <property type="molecule type" value="Genomic_DNA"/>
</dbReference>
<dbReference type="RefSeq" id="WP_006392304.1">
    <property type="nucleotide sequence ID" value="NC_011071.1"/>
</dbReference>
<dbReference type="SMR" id="B4SJ16"/>
<dbReference type="STRING" id="391008.Smal_3442"/>
<dbReference type="KEGG" id="smt:Smal_3442"/>
<dbReference type="eggNOG" id="COG0320">
    <property type="taxonomic scope" value="Bacteria"/>
</dbReference>
<dbReference type="HOGENOM" id="CLU_033144_2_1_6"/>
<dbReference type="OrthoDB" id="9787898at2"/>
<dbReference type="UniPathway" id="UPA00538">
    <property type="reaction ID" value="UER00593"/>
</dbReference>
<dbReference type="Proteomes" id="UP000001867">
    <property type="component" value="Chromosome"/>
</dbReference>
<dbReference type="GO" id="GO:0005737">
    <property type="term" value="C:cytoplasm"/>
    <property type="evidence" value="ECO:0007669"/>
    <property type="project" value="UniProtKB-SubCell"/>
</dbReference>
<dbReference type="GO" id="GO:0051539">
    <property type="term" value="F:4 iron, 4 sulfur cluster binding"/>
    <property type="evidence" value="ECO:0007669"/>
    <property type="project" value="UniProtKB-UniRule"/>
</dbReference>
<dbReference type="GO" id="GO:0016992">
    <property type="term" value="F:lipoate synthase activity"/>
    <property type="evidence" value="ECO:0007669"/>
    <property type="project" value="UniProtKB-UniRule"/>
</dbReference>
<dbReference type="GO" id="GO:0046872">
    <property type="term" value="F:metal ion binding"/>
    <property type="evidence" value="ECO:0007669"/>
    <property type="project" value="UniProtKB-KW"/>
</dbReference>
<dbReference type="CDD" id="cd01335">
    <property type="entry name" value="Radical_SAM"/>
    <property type="match status" value="1"/>
</dbReference>
<dbReference type="FunFam" id="3.20.20.70:FF:000023">
    <property type="entry name" value="Lipoyl synthase"/>
    <property type="match status" value="1"/>
</dbReference>
<dbReference type="Gene3D" id="3.20.20.70">
    <property type="entry name" value="Aldolase class I"/>
    <property type="match status" value="1"/>
</dbReference>
<dbReference type="HAMAP" id="MF_00206">
    <property type="entry name" value="Lipoyl_synth"/>
    <property type="match status" value="1"/>
</dbReference>
<dbReference type="InterPro" id="IPR013785">
    <property type="entry name" value="Aldolase_TIM"/>
</dbReference>
<dbReference type="InterPro" id="IPR006638">
    <property type="entry name" value="Elp3/MiaA/NifB-like_rSAM"/>
</dbReference>
<dbReference type="InterPro" id="IPR031691">
    <property type="entry name" value="LIAS_N"/>
</dbReference>
<dbReference type="InterPro" id="IPR003698">
    <property type="entry name" value="Lipoyl_synth"/>
</dbReference>
<dbReference type="InterPro" id="IPR007197">
    <property type="entry name" value="rSAM"/>
</dbReference>
<dbReference type="NCBIfam" id="TIGR00510">
    <property type="entry name" value="lipA"/>
    <property type="match status" value="1"/>
</dbReference>
<dbReference type="NCBIfam" id="NF004019">
    <property type="entry name" value="PRK05481.1"/>
    <property type="match status" value="1"/>
</dbReference>
<dbReference type="NCBIfam" id="NF009544">
    <property type="entry name" value="PRK12928.1"/>
    <property type="match status" value="1"/>
</dbReference>
<dbReference type="PANTHER" id="PTHR10949">
    <property type="entry name" value="LIPOYL SYNTHASE"/>
    <property type="match status" value="1"/>
</dbReference>
<dbReference type="PANTHER" id="PTHR10949:SF0">
    <property type="entry name" value="LIPOYL SYNTHASE, MITOCHONDRIAL"/>
    <property type="match status" value="1"/>
</dbReference>
<dbReference type="Pfam" id="PF16881">
    <property type="entry name" value="LIAS_N"/>
    <property type="match status" value="1"/>
</dbReference>
<dbReference type="Pfam" id="PF04055">
    <property type="entry name" value="Radical_SAM"/>
    <property type="match status" value="1"/>
</dbReference>
<dbReference type="PIRSF" id="PIRSF005963">
    <property type="entry name" value="Lipoyl_synth"/>
    <property type="match status" value="1"/>
</dbReference>
<dbReference type="SFLD" id="SFLDF00271">
    <property type="entry name" value="lipoyl_synthase"/>
    <property type="match status" value="1"/>
</dbReference>
<dbReference type="SFLD" id="SFLDS00029">
    <property type="entry name" value="Radical_SAM"/>
    <property type="match status" value="1"/>
</dbReference>
<dbReference type="SMART" id="SM00729">
    <property type="entry name" value="Elp3"/>
    <property type="match status" value="1"/>
</dbReference>
<dbReference type="SUPFAM" id="SSF102114">
    <property type="entry name" value="Radical SAM enzymes"/>
    <property type="match status" value="1"/>
</dbReference>
<dbReference type="PROSITE" id="PS51918">
    <property type="entry name" value="RADICAL_SAM"/>
    <property type="match status" value="1"/>
</dbReference>
<sequence length="336" mass="37062">MTESTARSIPLQIVQGDSPSAAPLQAGVKQLGGDKINRSPVQFADAPVLRKPSWIRVRIPSGNAVQNLKAKLRENRLVTVCEEASCPNIHECFGHGTATFMILGEVCTRRCSFCDVAHGRPKPPDANEPASLGQTVADMGLKYVVVTSVDRDDLRDGGAQHFVDCISAIREKSPGTRIEVLTPDFRGKGRMERALEILAQNPPDVFNHNIETVPDLYRNVRPGADYQWSLNLLKNFKAQHPEVPTKSGIMLGLGEEFEQIKATMRDLRAHDVDMITIGQYLQPTAHHHPVLKYWTPEDYKALEDYGYELGFSHVASGPMVRSSYHADVQAKGAGVS</sequence>
<feature type="chain" id="PRO_1000099638" description="Lipoyl synthase">
    <location>
        <begin position="1"/>
        <end position="336"/>
    </location>
</feature>
<feature type="domain" description="Radical SAM core" evidence="2">
    <location>
        <begin position="93"/>
        <end position="312"/>
    </location>
</feature>
<feature type="binding site" evidence="1">
    <location>
        <position position="81"/>
    </location>
    <ligand>
        <name>[4Fe-4S] cluster</name>
        <dbReference type="ChEBI" id="CHEBI:49883"/>
        <label>1</label>
    </ligand>
</feature>
<feature type="binding site" evidence="1">
    <location>
        <position position="86"/>
    </location>
    <ligand>
        <name>[4Fe-4S] cluster</name>
        <dbReference type="ChEBI" id="CHEBI:49883"/>
        <label>1</label>
    </ligand>
</feature>
<feature type="binding site" evidence="1">
    <location>
        <position position="92"/>
    </location>
    <ligand>
        <name>[4Fe-4S] cluster</name>
        <dbReference type="ChEBI" id="CHEBI:49883"/>
        <label>1</label>
    </ligand>
</feature>
<feature type="binding site" evidence="1">
    <location>
        <position position="107"/>
    </location>
    <ligand>
        <name>[4Fe-4S] cluster</name>
        <dbReference type="ChEBI" id="CHEBI:49883"/>
        <label>2</label>
        <note>4Fe-4S-S-AdoMet</note>
    </ligand>
</feature>
<feature type="binding site" evidence="1">
    <location>
        <position position="111"/>
    </location>
    <ligand>
        <name>[4Fe-4S] cluster</name>
        <dbReference type="ChEBI" id="CHEBI:49883"/>
        <label>2</label>
        <note>4Fe-4S-S-AdoMet</note>
    </ligand>
</feature>
<feature type="binding site" evidence="1">
    <location>
        <position position="114"/>
    </location>
    <ligand>
        <name>[4Fe-4S] cluster</name>
        <dbReference type="ChEBI" id="CHEBI:49883"/>
        <label>2</label>
        <note>4Fe-4S-S-AdoMet</note>
    </ligand>
</feature>
<feature type="binding site" evidence="1">
    <location>
        <position position="323"/>
    </location>
    <ligand>
        <name>[4Fe-4S] cluster</name>
        <dbReference type="ChEBI" id="CHEBI:49883"/>
        <label>1</label>
    </ligand>
</feature>
<keyword id="KW-0004">4Fe-4S</keyword>
<keyword id="KW-0963">Cytoplasm</keyword>
<keyword id="KW-0408">Iron</keyword>
<keyword id="KW-0411">Iron-sulfur</keyword>
<keyword id="KW-0479">Metal-binding</keyword>
<keyword id="KW-0949">S-adenosyl-L-methionine</keyword>
<keyword id="KW-0808">Transferase</keyword>
<gene>
    <name evidence="1" type="primary">lipA</name>
    <name type="ordered locus">Smal_3442</name>
</gene>
<reference key="1">
    <citation type="submission" date="2008-06" db="EMBL/GenBank/DDBJ databases">
        <title>Complete sequence of Stenotrophomonas maltophilia R551-3.</title>
        <authorList>
            <consortium name="US DOE Joint Genome Institute"/>
            <person name="Lucas S."/>
            <person name="Copeland A."/>
            <person name="Lapidus A."/>
            <person name="Glavina del Rio T."/>
            <person name="Dalin E."/>
            <person name="Tice H."/>
            <person name="Pitluck S."/>
            <person name="Chain P."/>
            <person name="Malfatti S."/>
            <person name="Shin M."/>
            <person name="Vergez L."/>
            <person name="Lang D."/>
            <person name="Schmutz J."/>
            <person name="Larimer F."/>
            <person name="Land M."/>
            <person name="Hauser L."/>
            <person name="Kyrpides N."/>
            <person name="Mikhailova N."/>
            <person name="Taghavi S."/>
            <person name="Monchy S."/>
            <person name="Newman L."/>
            <person name="Vangronsveld J."/>
            <person name="van der Lelie D."/>
            <person name="Richardson P."/>
        </authorList>
    </citation>
    <scope>NUCLEOTIDE SEQUENCE [LARGE SCALE GENOMIC DNA]</scope>
    <source>
        <strain>R551-3</strain>
    </source>
</reference>
<proteinExistence type="inferred from homology"/>